<dbReference type="EC" id="2.8.2.-"/>
<dbReference type="EMBL" id="AJ720840">
    <property type="protein sequence ID" value="CAG32499.1"/>
    <property type="molecule type" value="mRNA"/>
</dbReference>
<dbReference type="EMBL" id="AF468194">
    <property type="protein sequence ID" value="AAN60757.1"/>
    <property type="molecule type" value="mRNA"/>
</dbReference>
<dbReference type="RefSeq" id="NP_001025514.1">
    <property type="nucleotide sequence ID" value="NM_001030343.1"/>
</dbReference>
<dbReference type="FunCoup" id="Q5ZIE4">
    <property type="interactions" value="322"/>
</dbReference>
<dbReference type="STRING" id="9031.ENSGALP00000027024"/>
<dbReference type="GlyCosmos" id="Q5ZIE4">
    <property type="glycosylation" value="2 sites, No reported glycans"/>
</dbReference>
<dbReference type="GlyGen" id="Q5ZIE4">
    <property type="glycosylation" value="2 sites"/>
</dbReference>
<dbReference type="PaxDb" id="9031-ENSGALP00000040860"/>
<dbReference type="GeneID" id="395206"/>
<dbReference type="KEGG" id="gga:395206"/>
<dbReference type="CTD" id="9486"/>
<dbReference type="VEuPathDB" id="HostDB:geneid_395206"/>
<dbReference type="eggNOG" id="KOG4651">
    <property type="taxonomic scope" value="Eukaryota"/>
</dbReference>
<dbReference type="HOGENOM" id="CLU_043398_2_0_1"/>
<dbReference type="InParanoid" id="Q5ZIE4"/>
<dbReference type="OrthoDB" id="2019940at2759"/>
<dbReference type="PhylomeDB" id="Q5ZIE4"/>
<dbReference type="TreeFam" id="TF325581"/>
<dbReference type="PRO" id="PR:Q5ZIE4"/>
<dbReference type="Proteomes" id="UP000000539">
    <property type="component" value="Unassembled WGS sequence"/>
</dbReference>
<dbReference type="GO" id="GO:0000139">
    <property type="term" value="C:Golgi membrane"/>
    <property type="evidence" value="ECO:0007669"/>
    <property type="project" value="UniProtKB-SubCell"/>
</dbReference>
<dbReference type="GO" id="GO:0008146">
    <property type="term" value="F:sulfotransferase activity"/>
    <property type="evidence" value="ECO:0000318"/>
    <property type="project" value="GO_Central"/>
</dbReference>
<dbReference type="GO" id="GO:0016051">
    <property type="term" value="P:carbohydrate biosynthetic process"/>
    <property type="evidence" value="ECO:0007669"/>
    <property type="project" value="InterPro"/>
</dbReference>
<dbReference type="GO" id="GO:0030166">
    <property type="term" value="P:proteoglycan biosynthetic process"/>
    <property type="evidence" value="ECO:0000318"/>
    <property type="project" value="GO_Central"/>
</dbReference>
<dbReference type="InterPro" id="IPR018011">
    <property type="entry name" value="Carb_sulfotrans_8-10"/>
</dbReference>
<dbReference type="InterPro" id="IPR027417">
    <property type="entry name" value="P-loop_NTPase"/>
</dbReference>
<dbReference type="InterPro" id="IPR005331">
    <property type="entry name" value="Sulfotransferase"/>
</dbReference>
<dbReference type="PANTHER" id="PTHR12137">
    <property type="entry name" value="CARBOHYDRATE SULFOTRANSFERASE"/>
    <property type="match status" value="1"/>
</dbReference>
<dbReference type="PANTHER" id="PTHR12137:SF2">
    <property type="entry name" value="CARBOHYDRATE SULFOTRANSFERASE 10"/>
    <property type="match status" value="1"/>
</dbReference>
<dbReference type="Pfam" id="PF03567">
    <property type="entry name" value="Sulfotransfer_2"/>
    <property type="match status" value="1"/>
</dbReference>
<dbReference type="SUPFAM" id="SSF52540">
    <property type="entry name" value="P-loop containing nucleoside triphosphate hydrolases"/>
    <property type="match status" value="1"/>
</dbReference>
<gene>
    <name type="primary">CHST10</name>
    <name type="ORF">RCJMB04_27h10</name>
</gene>
<organism>
    <name type="scientific">Gallus gallus</name>
    <name type="common">Chicken</name>
    <dbReference type="NCBI Taxonomy" id="9031"/>
    <lineage>
        <taxon>Eukaryota</taxon>
        <taxon>Metazoa</taxon>
        <taxon>Chordata</taxon>
        <taxon>Craniata</taxon>
        <taxon>Vertebrata</taxon>
        <taxon>Euteleostomi</taxon>
        <taxon>Archelosauria</taxon>
        <taxon>Archosauria</taxon>
        <taxon>Dinosauria</taxon>
        <taxon>Saurischia</taxon>
        <taxon>Theropoda</taxon>
        <taxon>Coelurosauria</taxon>
        <taxon>Aves</taxon>
        <taxon>Neognathae</taxon>
        <taxon>Galloanserae</taxon>
        <taxon>Galliformes</taxon>
        <taxon>Phasianidae</taxon>
        <taxon>Phasianinae</taxon>
        <taxon>Gallus</taxon>
    </lineage>
</organism>
<sequence length="358" mass="42148">MHHQWLLLAACFWVIFMFMVASKFITLTFKDPDGYGAKQEPLILTAVTKVEEARVPEEKHWTKEFQPTGKAFTGNLLHHPLVHMERLELLRNVCRDTALRNLSHTAVSKFVLDRIFVCDKHKILFCQTPKVGNTQWKKVLIVLNGAYSSIDEIPESIVHDHEKNGLPRLSSFSDSEIKKRLNLYFKFFIVRDPFERLISAFKDKFVHNPRFEPWYRHEIAPSIIRKYRRNRMETKGLQFEDFVRYLGDPNHRWLDVQFGDHIIHWVTYVELCAPCEITYSVIGHHETLEDDAPYILKAAGIDRLVSYPTIPPGITVYNKTKVERYFSGISKRDIRRLYARFEGDFKLFGYRVPDFLLN</sequence>
<name>CHSTA_CHICK</name>
<comment type="function">
    <text evidence="1">Catalyzes the transfer of sulfate to position 3 of terminal glucuronic acid of both protein- and lipid-linked oligosaccharides. Participates in biosynthesis of HNK-1 carbohydrate structure, a sulfated glucuronyl-lactosaminyl residue carried by many neural recognition molecules, which is involved in cell interactions during ontogenetic development and in synaptic plasticity in the adult (By similarity).</text>
</comment>
<comment type="subcellular location">
    <subcellularLocation>
        <location evidence="1">Golgi apparatus membrane</location>
        <topology evidence="1">Single-pass type II membrane protein</topology>
    </subcellularLocation>
</comment>
<comment type="tissue specificity">
    <text evidence="3">Predominantly expressed in hypertrophic, prehypertrophic and proliferative chondrocytes at E12 but is down-regulated in epiphyseal chondrocytes.</text>
</comment>
<comment type="similarity">
    <text evidence="4">Belongs to the sulfotransferase 2 family.</text>
</comment>
<feature type="chain" id="PRO_0000189661" description="Carbohydrate sulfotransferase 10">
    <location>
        <begin position="1"/>
        <end position="358"/>
    </location>
</feature>
<feature type="topological domain" description="Cytoplasmic" evidence="2">
    <location>
        <begin position="1"/>
        <end position="6"/>
    </location>
</feature>
<feature type="transmembrane region" description="Helical; Signal-anchor for type II membrane protein" evidence="2">
    <location>
        <begin position="7"/>
        <end position="27"/>
    </location>
</feature>
<feature type="topological domain" description="Lumenal" evidence="2">
    <location>
        <begin position="28"/>
        <end position="358"/>
    </location>
</feature>
<feature type="binding site" evidence="1">
    <location>
        <begin position="129"/>
        <end position="135"/>
    </location>
    <ligand>
        <name>3'-phosphoadenylyl sulfate</name>
        <dbReference type="ChEBI" id="CHEBI:58339"/>
    </ligand>
</feature>
<feature type="binding site" evidence="1">
    <location>
        <begin position="191"/>
        <end position="199"/>
    </location>
    <ligand>
        <name>3'-phosphoadenylyl sulfate</name>
        <dbReference type="ChEBI" id="CHEBI:58339"/>
    </ligand>
</feature>
<feature type="glycosylation site" description="N-linked (GlcNAc...) asparagine" evidence="2">
    <location>
        <position position="101"/>
    </location>
</feature>
<feature type="glycosylation site" description="N-linked (GlcNAc...) asparagine" evidence="2">
    <location>
        <position position="318"/>
    </location>
</feature>
<feature type="sequence conflict" description="In Ref. 2; AAN60757." evidence="4" ref="2">
    <original>A</original>
    <variation>E</variation>
    <location>
        <position position="298"/>
    </location>
</feature>
<feature type="sequence conflict" description="In Ref. 2; AAN60757." evidence="4" ref="2">
    <original>R</original>
    <variation>H</variation>
    <location>
        <position position="303"/>
    </location>
</feature>
<reference key="1">
    <citation type="journal article" date="2005" name="Genome Biol.">
        <title>Full-length cDNAs from chicken bursal lymphocytes to facilitate gene function analysis.</title>
        <authorList>
            <person name="Caldwell R.B."/>
            <person name="Kierzek A.M."/>
            <person name="Arakawa H."/>
            <person name="Bezzubov Y."/>
            <person name="Zaim J."/>
            <person name="Fiedler P."/>
            <person name="Kutter S."/>
            <person name="Blagodatski A."/>
            <person name="Kostovska D."/>
            <person name="Koter M."/>
            <person name="Plachy J."/>
            <person name="Carninci P."/>
            <person name="Hayashizaki Y."/>
            <person name="Buerstedde J.-M."/>
        </authorList>
    </citation>
    <scope>NUCLEOTIDE SEQUENCE [LARGE SCALE MRNA]</scope>
    <source>
        <strain>CB</strain>
        <tissue>Bursa of Fabricius</tissue>
    </source>
</reference>
<reference key="2">
    <citation type="journal article" date="2003" name="Dev. Dyn.">
        <title>Developmental expression of the HNK-1 carbohydrate epitope on aggrecan during chondrogenesis.</title>
        <authorList>
            <person name="Domowicz M.S."/>
            <person name="Mueller M.M."/>
            <person name="Novak T.E."/>
            <person name="Schwartz L.E."/>
            <person name="Schwartz N.B."/>
        </authorList>
    </citation>
    <scope>NUCLEOTIDE SEQUENCE [MRNA] OF 132-305</scope>
    <scope>TISSUE SPECIFICITY</scope>
    <source>
        <tissue>Brain</tissue>
        <tissue>Cartilage</tissue>
    </source>
</reference>
<protein>
    <recommendedName>
        <fullName>Carbohydrate sulfotransferase 10</fullName>
        <ecNumber>2.8.2.-</ecNumber>
    </recommendedName>
    <alternativeName>
        <fullName>HNK-1 sulfotransferase</fullName>
        <shortName>HNK-1ST</shortName>
        <shortName>HNK1ST</shortName>
    </alternativeName>
</protein>
<keyword id="KW-0119">Carbohydrate metabolism</keyword>
<keyword id="KW-0325">Glycoprotein</keyword>
<keyword id="KW-0333">Golgi apparatus</keyword>
<keyword id="KW-0472">Membrane</keyword>
<keyword id="KW-1185">Reference proteome</keyword>
<keyword id="KW-0735">Signal-anchor</keyword>
<keyword id="KW-0808">Transferase</keyword>
<keyword id="KW-0812">Transmembrane</keyword>
<keyword id="KW-1133">Transmembrane helix</keyword>
<proteinExistence type="evidence at transcript level"/>
<accession>Q5ZIE4</accession>
<accession>Q8AYG8</accession>
<evidence type="ECO:0000250" key="1"/>
<evidence type="ECO:0000255" key="2"/>
<evidence type="ECO:0000269" key="3">
    <source>
    </source>
</evidence>
<evidence type="ECO:0000305" key="4"/>